<name>RDGC_XYLFA</name>
<gene>
    <name evidence="1" type="primary">rdgC</name>
    <name type="ordered locus">XF_0568</name>
</gene>
<keyword id="KW-0963">Cytoplasm</keyword>
<keyword id="KW-0233">DNA recombination</keyword>
<organism>
    <name type="scientific">Xylella fastidiosa (strain 9a5c)</name>
    <dbReference type="NCBI Taxonomy" id="160492"/>
    <lineage>
        <taxon>Bacteria</taxon>
        <taxon>Pseudomonadati</taxon>
        <taxon>Pseudomonadota</taxon>
        <taxon>Gammaproteobacteria</taxon>
        <taxon>Lysobacterales</taxon>
        <taxon>Lysobacteraceae</taxon>
        <taxon>Xylella</taxon>
    </lineage>
</organism>
<protein>
    <recommendedName>
        <fullName evidence="1">Recombination-associated protein RdgC</fullName>
    </recommendedName>
</protein>
<comment type="function">
    <text evidence="1">May be involved in recombination.</text>
</comment>
<comment type="subcellular location">
    <subcellularLocation>
        <location evidence="1">Cytoplasm</location>
        <location evidence="1">Nucleoid</location>
    </subcellularLocation>
</comment>
<comment type="similarity">
    <text evidence="1">Belongs to the RdgC family.</text>
</comment>
<reference key="1">
    <citation type="journal article" date="2000" name="Nature">
        <title>The genome sequence of the plant pathogen Xylella fastidiosa.</title>
        <authorList>
            <person name="Simpson A.J.G."/>
            <person name="Reinach F.C."/>
            <person name="Arruda P."/>
            <person name="Abreu F.A."/>
            <person name="Acencio M."/>
            <person name="Alvarenga R."/>
            <person name="Alves L.M.C."/>
            <person name="Araya J.E."/>
            <person name="Baia G.S."/>
            <person name="Baptista C.S."/>
            <person name="Barros M.H."/>
            <person name="Bonaccorsi E.D."/>
            <person name="Bordin S."/>
            <person name="Bove J.M."/>
            <person name="Briones M.R.S."/>
            <person name="Bueno M.R.P."/>
            <person name="Camargo A.A."/>
            <person name="Camargo L.E.A."/>
            <person name="Carraro D.M."/>
            <person name="Carrer H."/>
            <person name="Colauto N.B."/>
            <person name="Colombo C."/>
            <person name="Costa F.F."/>
            <person name="Costa M.C.R."/>
            <person name="Costa-Neto C.M."/>
            <person name="Coutinho L.L."/>
            <person name="Cristofani M."/>
            <person name="Dias-Neto E."/>
            <person name="Docena C."/>
            <person name="El-Dorry H."/>
            <person name="Facincani A.P."/>
            <person name="Ferreira A.J.S."/>
            <person name="Ferreira V.C.A."/>
            <person name="Ferro J.A."/>
            <person name="Fraga J.S."/>
            <person name="Franca S.C."/>
            <person name="Franco M.C."/>
            <person name="Frohme M."/>
            <person name="Furlan L.R."/>
            <person name="Garnier M."/>
            <person name="Goldman G.H."/>
            <person name="Goldman M.H.S."/>
            <person name="Gomes S.L."/>
            <person name="Gruber A."/>
            <person name="Ho P.L."/>
            <person name="Hoheisel J.D."/>
            <person name="Junqueira M.L."/>
            <person name="Kemper E.L."/>
            <person name="Kitajima J.P."/>
            <person name="Krieger J.E."/>
            <person name="Kuramae E.E."/>
            <person name="Laigret F."/>
            <person name="Lambais M.R."/>
            <person name="Leite L.C.C."/>
            <person name="Lemos E.G.M."/>
            <person name="Lemos M.V.F."/>
            <person name="Lopes S.A."/>
            <person name="Lopes C.R."/>
            <person name="Machado J.A."/>
            <person name="Machado M.A."/>
            <person name="Madeira A.M.B.N."/>
            <person name="Madeira H.M.F."/>
            <person name="Marino C.L."/>
            <person name="Marques M.V."/>
            <person name="Martins E.A.L."/>
            <person name="Martins E.M.F."/>
            <person name="Matsukuma A.Y."/>
            <person name="Menck C.F.M."/>
            <person name="Miracca E.C."/>
            <person name="Miyaki C.Y."/>
            <person name="Monteiro-Vitorello C.B."/>
            <person name="Moon D.H."/>
            <person name="Nagai M.A."/>
            <person name="Nascimento A.L.T.O."/>
            <person name="Netto L.E.S."/>
            <person name="Nhani A. Jr."/>
            <person name="Nobrega F.G."/>
            <person name="Nunes L.R."/>
            <person name="Oliveira M.A."/>
            <person name="de Oliveira M.C."/>
            <person name="de Oliveira R.C."/>
            <person name="Palmieri D.A."/>
            <person name="Paris A."/>
            <person name="Peixoto B.R."/>
            <person name="Pereira G.A.G."/>
            <person name="Pereira H.A. Jr."/>
            <person name="Pesquero J.B."/>
            <person name="Quaggio R.B."/>
            <person name="Roberto P.G."/>
            <person name="Rodrigues V."/>
            <person name="de Rosa A.J.M."/>
            <person name="de Rosa V.E. Jr."/>
            <person name="de Sa R.G."/>
            <person name="Santelli R.V."/>
            <person name="Sawasaki H.E."/>
            <person name="da Silva A.C.R."/>
            <person name="da Silva A.M."/>
            <person name="da Silva F.R."/>
            <person name="Silva W.A. Jr."/>
            <person name="da Silveira J.F."/>
            <person name="Silvestri M.L.Z."/>
            <person name="Siqueira W.J."/>
            <person name="de Souza A.A."/>
            <person name="de Souza A.P."/>
            <person name="Terenzi M.F."/>
            <person name="Truffi D."/>
            <person name="Tsai S.M."/>
            <person name="Tsuhako M.H."/>
            <person name="Vallada H."/>
            <person name="Van Sluys M.A."/>
            <person name="Verjovski-Almeida S."/>
            <person name="Vettore A.L."/>
            <person name="Zago M.A."/>
            <person name="Zatz M."/>
            <person name="Meidanis J."/>
            <person name="Setubal J.C."/>
        </authorList>
    </citation>
    <scope>NUCLEOTIDE SEQUENCE [LARGE SCALE GENOMIC DNA]</scope>
    <source>
        <strain>9a5c</strain>
    </source>
</reference>
<dbReference type="EMBL" id="AE003849">
    <property type="protein sequence ID" value="AAF83378.1"/>
    <property type="molecule type" value="Genomic_DNA"/>
</dbReference>
<dbReference type="PIR" id="F82791">
    <property type="entry name" value="F82791"/>
</dbReference>
<dbReference type="RefSeq" id="WP_010893094.1">
    <property type="nucleotide sequence ID" value="NC_002488.3"/>
</dbReference>
<dbReference type="SMR" id="Q9PFT9"/>
<dbReference type="STRING" id="160492.XF_0568"/>
<dbReference type="KEGG" id="xfa:XF_0568"/>
<dbReference type="eggNOG" id="COG2974">
    <property type="taxonomic scope" value="Bacteria"/>
</dbReference>
<dbReference type="HOGENOM" id="CLU_052038_1_1_6"/>
<dbReference type="Proteomes" id="UP000000812">
    <property type="component" value="Chromosome"/>
</dbReference>
<dbReference type="GO" id="GO:0043590">
    <property type="term" value="C:bacterial nucleoid"/>
    <property type="evidence" value="ECO:0007669"/>
    <property type="project" value="TreeGrafter"/>
</dbReference>
<dbReference type="GO" id="GO:0005737">
    <property type="term" value="C:cytoplasm"/>
    <property type="evidence" value="ECO:0007669"/>
    <property type="project" value="UniProtKB-UniRule"/>
</dbReference>
<dbReference type="GO" id="GO:0003690">
    <property type="term" value="F:double-stranded DNA binding"/>
    <property type="evidence" value="ECO:0007669"/>
    <property type="project" value="TreeGrafter"/>
</dbReference>
<dbReference type="GO" id="GO:0006310">
    <property type="term" value="P:DNA recombination"/>
    <property type="evidence" value="ECO:0007669"/>
    <property type="project" value="UniProtKB-UniRule"/>
</dbReference>
<dbReference type="GO" id="GO:0000018">
    <property type="term" value="P:regulation of DNA recombination"/>
    <property type="evidence" value="ECO:0007669"/>
    <property type="project" value="TreeGrafter"/>
</dbReference>
<dbReference type="HAMAP" id="MF_00194">
    <property type="entry name" value="RdgC"/>
    <property type="match status" value="1"/>
</dbReference>
<dbReference type="InterPro" id="IPR007476">
    <property type="entry name" value="RdgC"/>
</dbReference>
<dbReference type="NCBIfam" id="NF001464">
    <property type="entry name" value="PRK00321.1-5"/>
    <property type="match status" value="1"/>
</dbReference>
<dbReference type="NCBIfam" id="NF001465">
    <property type="entry name" value="PRK00321.1-6"/>
    <property type="match status" value="1"/>
</dbReference>
<dbReference type="PANTHER" id="PTHR38103">
    <property type="entry name" value="RECOMBINATION-ASSOCIATED PROTEIN RDGC"/>
    <property type="match status" value="1"/>
</dbReference>
<dbReference type="PANTHER" id="PTHR38103:SF1">
    <property type="entry name" value="RECOMBINATION-ASSOCIATED PROTEIN RDGC"/>
    <property type="match status" value="1"/>
</dbReference>
<dbReference type="Pfam" id="PF04381">
    <property type="entry name" value="RdgC"/>
    <property type="match status" value="1"/>
</dbReference>
<feature type="chain" id="PRO_0000211758" description="Recombination-associated protein RdgC">
    <location>
        <begin position="1"/>
        <end position="302"/>
    </location>
</feature>
<proteinExistence type="inferred from homology"/>
<evidence type="ECO:0000255" key="1">
    <source>
        <dbReference type="HAMAP-Rule" id="MF_00194"/>
    </source>
</evidence>
<accession>Q9PFT9</accession>
<sequence length="302" mass="34070">MFFRNLTLFRFPTSLDFSQIDSILPNARLRPVGPLEMTSRGFISPFGREEQEVLNQRQGDFLWLTVGSEDKILPASVVNDLLTRKCSEIEEKKGHPPGGRERKRIKDDLIHELLPRAFVKKSRIDAMLDLRYGYVAVDTASRKAAETVISEIRDLLGSFPALPLNAEISIRSMLTSWIAGEPLPEHLNLGDECEMKDATEGGAIIKCQHQALRCEEIDKHLEVGKQVSKLALILDDHVSFVLGDDLVIRKLKFLDGMLDQLEHSDTDGIRAELDARFALMSAEIRRLFLLLEVPLKLSKANN</sequence>